<feature type="chain" id="PRO_1000129227" description="Succinate--CoA ligase [ADP-forming] subunit beta">
    <location>
        <begin position="1"/>
        <end position="388"/>
    </location>
</feature>
<feature type="domain" description="ATP-grasp" evidence="1">
    <location>
        <begin position="9"/>
        <end position="244"/>
    </location>
</feature>
<feature type="binding site" evidence="1">
    <location>
        <position position="46"/>
    </location>
    <ligand>
        <name>ATP</name>
        <dbReference type="ChEBI" id="CHEBI:30616"/>
    </ligand>
</feature>
<feature type="binding site" evidence="1">
    <location>
        <begin position="53"/>
        <end position="55"/>
    </location>
    <ligand>
        <name>ATP</name>
        <dbReference type="ChEBI" id="CHEBI:30616"/>
    </ligand>
</feature>
<feature type="binding site" evidence="1">
    <location>
        <position position="99"/>
    </location>
    <ligand>
        <name>ATP</name>
        <dbReference type="ChEBI" id="CHEBI:30616"/>
    </ligand>
</feature>
<feature type="binding site" evidence="1">
    <location>
        <position position="102"/>
    </location>
    <ligand>
        <name>ATP</name>
        <dbReference type="ChEBI" id="CHEBI:30616"/>
    </ligand>
</feature>
<feature type="binding site" evidence="1">
    <location>
        <position position="107"/>
    </location>
    <ligand>
        <name>ATP</name>
        <dbReference type="ChEBI" id="CHEBI:30616"/>
    </ligand>
</feature>
<feature type="binding site" evidence="1">
    <location>
        <position position="199"/>
    </location>
    <ligand>
        <name>Mg(2+)</name>
        <dbReference type="ChEBI" id="CHEBI:18420"/>
    </ligand>
</feature>
<feature type="binding site" evidence="1">
    <location>
        <position position="213"/>
    </location>
    <ligand>
        <name>Mg(2+)</name>
        <dbReference type="ChEBI" id="CHEBI:18420"/>
    </ligand>
</feature>
<feature type="binding site" evidence="1">
    <location>
        <position position="264"/>
    </location>
    <ligand>
        <name>substrate</name>
        <note>ligand shared with subunit alpha</note>
    </ligand>
</feature>
<feature type="binding site" evidence="1">
    <location>
        <begin position="321"/>
        <end position="323"/>
    </location>
    <ligand>
        <name>substrate</name>
        <note>ligand shared with subunit alpha</note>
    </ligand>
</feature>
<keyword id="KW-0067">ATP-binding</keyword>
<keyword id="KW-0436">Ligase</keyword>
<keyword id="KW-0460">Magnesium</keyword>
<keyword id="KW-0479">Metal-binding</keyword>
<keyword id="KW-0547">Nucleotide-binding</keyword>
<keyword id="KW-0816">Tricarboxylic acid cycle</keyword>
<comment type="function">
    <text evidence="1">Succinyl-CoA synthetase functions in the citric acid cycle (TCA), coupling the hydrolysis of succinyl-CoA to the synthesis of either ATP or GTP and thus represents the only step of substrate-level phosphorylation in the TCA. The beta subunit provides nucleotide specificity of the enzyme and binds the substrate succinate, while the binding sites for coenzyme A and phosphate are found in the alpha subunit.</text>
</comment>
<comment type="catalytic activity">
    <reaction evidence="1">
        <text>succinate + ATP + CoA = succinyl-CoA + ADP + phosphate</text>
        <dbReference type="Rhea" id="RHEA:17661"/>
        <dbReference type="ChEBI" id="CHEBI:30031"/>
        <dbReference type="ChEBI" id="CHEBI:30616"/>
        <dbReference type="ChEBI" id="CHEBI:43474"/>
        <dbReference type="ChEBI" id="CHEBI:57287"/>
        <dbReference type="ChEBI" id="CHEBI:57292"/>
        <dbReference type="ChEBI" id="CHEBI:456216"/>
        <dbReference type="EC" id="6.2.1.5"/>
    </reaction>
    <physiologicalReaction direction="right-to-left" evidence="1">
        <dbReference type="Rhea" id="RHEA:17663"/>
    </physiologicalReaction>
</comment>
<comment type="catalytic activity">
    <reaction evidence="1">
        <text>GTP + succinate + CoA = succinyl-CoA + GDP + phosphate</text>
        <dbReference type="Rhea" id="RHEA:22120"/>
        <dbReference type="ChEBI" id="CHEBI:30031"/>
        <dbReference type="ChEBI" id="CHEBI:37565"/>
        <dbReference type="ChEBI" id="CHEBI:43474"/>
        <dbReference type="ChEBI" id="CHEBI:57287"/>
        <dbReference type="ChEBI" id="CHEBI:57292"/>
        <dbReference type="ChEBI" id="CHEBI:58189"/>
    </reaction>
    <physiologicalReaction direction="right-to-left" evidence="1">
        <dbReference type="Rhea" id="RHEA:22122"/>
    </physiologicalReaction>
</comment>
<comment type="cofactor">
    <cofactor evidence="1">
        <name>Mg(2+)</name>
        <dbReference type="ChEBI" id="CHEBI:18420"/>
    </cofactor>
    <text evidence="1">Binds 1 Mg(2+) ion per subunit.</text>
</comment>
<comment type="pathway">
    <text evidence="1">Carbohydrate metabolism; tricarboxylic acid cycle; succinate from succinyl-CoA (ligase route): step 1/1.</text>
</comment>
<comment type="subunit">
    <text evidence="1">Heterotetramer of two alpha and two beta subunits.</text>
</comment>
<comment type="similarity">
    <text evidence="1">Belongs to the succinate/malate CoA ligase beta subunit family.</text>
</comment>
<accession>B4TQ53</accession>
<gene>
    <name evidence="1" type="primary">sucC</name>
    <name type="ordered locus">SeSA_A0894</name>
</gene>
<name>SUCC_SALSV</name>
<organism>
    <name type="scientific">Salmonella schwarzengrund (strain CVM19633)</name>
    <dbReference type="NCBI Taxonomy" id="439843"/>
    <lineage>
        <taxon>Bacteria</taxon>
        <taxon>Pseudomonadati</taxon>
        <taxon>Pseudomonadota</taxon>
        <taxon>Gammaproteobacteria</taxon>
        <taxon>Enterobacterales</taxon>
        <taxon>Enterobacteriaceae</taxon>
        <taxon>Salmonella</taxon>
    </lineage>
</organism>
<sequence>MNLHEYQAKQLFARYGLPAPVGYACTTPREAEEAASKIGAGPWVVKCQVHAGGRGKAGGVKVVKSKEEIRAFAENWLGKRLVTYQTDANGQPVNQILVEAATDIGKELYLGAVVDRSSRRVVFMASTEGGVEIEKVAEETPHLIHKVALDPLTGPMPYQGRELAFKLGLEGKLVQQFTKIFMGLATIFLERDLALIEINPLVITKQGDLICLDGKLGADGNALFRQPDLREMRDQSQEDPREAQAAQWELNYVALDGNIGCMVNGAGLAMGTMDIVKLHGGEPANFLDVGGGATKERVTEAFKIILSDDNVKAVLVNIFGGIVRCDLIADGIIGAVEEVGVNVPVVVRLEGNNAELGAKKLADSGLNIIAAKSLTDAAQQVVAAVEGK</sequence>
<dbReference type="EC" id="6.2.1.5" evidence="1"/>
<dbReference type="EMBL" id="CP001127">
    <property type="protein sequence ID" value="ACF90970.1"/>
    <property type="molecule type" value="Genomic_DNA"/>
</dbReference>
<dbReference type="RefSeq" id="WP_001048590.1">
    <property type="nucleotide sequence ID" value="NC_011094.1"/>
</dbReference>
<dbReference type="SMR" id="B4TQ53"/>
<dbReference type="KEGG" id="sew:SeSA_A0894"/>
<dbReference type="HOGENOM" id="CLU_037430_4_0_6"/>
<dbReference type="UniPathway" id="UPA00223">
    <property type="reaction ID" value="UER00999"/>
</dbReference>
<dbReference type="Proteomes" id="UP000001865">
    <property type="component" value="Chromosome"/>
</dbReference>
<dbReference type="GO" id="GO:0005829">
    <property type="term" value="C:cytosol"/>
    <property type="evidence" value="ECO:0007669"/>
    <property type="project" value="TreeGrafter"/>
</dbReference>
<dbReference type="GO" id="GO:0042709">
    <property type="term" value="C:succinate-CoA ligase complex"/>
    <property type="evidence" value="ECO:0007669"/>
    <property type="project" value="TreeGrafter"/>
</dbReference>
<dbReference type="GO" id="GO:0005524">
    <property type="term" value="F:ATP binding"/>
    <property type="evidence" value="ECO:0007669"/>
    <property type="project" value="UniProtKB-UniRule"/>
</dbReference>
<dbReference type="GO" id="GO:0000287">
    <property type="term" value="F:magnesium ion binding"/>
    <property type="evidence" value="ECO:0007669"/>
    <property type="project" value="UniProtKB-UniRule"/>
</dbReference>
<dbReference type="GO" id="GO:0004775">
    <property type="term" value="F:succinate-CoA ligase (ADP-forming) activity"/>
    <property type="evidence" value="ECO:0007669"/>
    <property type="project" value="UniProtKB-UniRule"/>
</dbReference>
<dbReference type="GO" id="GO:0004776">
    <property type="term" value="F:succinate-CoA ligase (GDP-forming) activity"/>
    <property type="evidence" value="ECO:0007669"/>
    <property type="project" value="RHEA"/>
</dbReference>
<dbReference type="GO" id="GO:0006104">
    <property type="term" value="P:succinyl-CoA metabolic process"/>
    <property type="evidence" value="ECO:0007669"/>
    <property type="project" value="TreeGrafter"/>
</dbReference>
<dbReference type="GO" id="GO:0006099">
    <property type="term" value="P:tricarboxylic acid cycle"/>
    <property type="evidence" value="ECO:0007669"/>
    <property type="project" value="UniProtKB-UniRule"/>
</dbReference>
<dbReference type="FunFam" id="3.30.1490.20:FF:000002">
    <property type="entry name" value="Succinate--CoA ligase [ADP-forming] subunit beta"/>
    <property type="match status" value="1"/>
</dbReference>
<dbReference type="FunFam" id="3.30.470.20:FF:000002">
    <property type="entry name" value="Succinate--CoA ligase [ADP-forming] subunit beta"/>
    <property type="match status" value="1"/>
</dbReference>
<dbReference type="FunFam" id="3.40.50.261:FF:000001">
    <property type="entry name" value="Succinate--CoA ligase [ADP-forming] subunit beta"/>
    <property type="match status" value="1"/>
</dbReference>
<dbReference type="Gene3D" id="3.30.1490.20">
    <property type="entry name" value="ATP-grasp fold, A domain"/>
    <property type="match status" value="1"/>
</dbReference>
<dbReference type="Gene3D" id="3.30.470.20">
    <property type="entry name" value="ATP-grasp fold, B domain"/>
    <property type="match status" value="1"/>
</dbReference>
<dbReference type="Gene3D" id="3.40.50.261">
    <property type="entry name" value="Succinyl-CoA synthetase domains"/>
    <property type="match status" value="1"/>
</dbReference>
<dbReference type="HAMAP" id="MF_00558">
    <property type="entry name" value="Succ_CoA_beta"/>
    <property type="match status" value="1"/>
</dbReference>
<dbReference type="InterPro" id="IPR011761">
    <property type="entry name" value="ATP-grasp"/>
</dbReference>
<dbReference type="InterPro" id="IPR013650">
    <property type="entry name" value="ATP-grasp_succ-CoA_synth-type"/>
</dbReference>
<dbReference type="InterPro" id="IPR013815">
    <property type="entry name" value="ATP_grasp_subdomain_1"/>
</dbReference>
<dbReference type="InterPro" id="IPR017866">
    <property type="entry name" value="Succ-CoA_synthase_bsu_CS"/>
</dbReference>
<dbReference type="InterPro" id="IPR005811">
    <property type="entry name" value="SUCC_ACL_C"/>
</dbReference>
<dbReference type="InterPro" id="IPR005809">
    <property type="entry name" value="Succ_CoA_ligase-like_bsu"/>
</dbReference>
<dbReference type="InterPro" id="IPR016102">
    <property type="entry name" value="Succinyl-CoA_synth-like"/>
</dbReference>
<dbReference type="NCBIfam" id="NF001913">
    <property type="entry name" value="PRK00696.1"/>
    <property type="match status" value="1"/>
</dbReference>
<dbReference type="NCBIfam" id="TIGR01016">
    <property type="entry name" value="sucCoAbeta"/>
    <property type="match status" value="1"/>
</dbReference>
<dbReference type="PANTHER" id="PTHR11815:SF10">
    <property type="entry name" value="SUCCINATE--COA LIGASE [GDP-FORMING] SUBUNIT BETA, MITOCHONDRIAL"/>
    <property type="match status" value="1"/>
</dbReference>
<dbReference type="PANTHER" id="PTHR11815">
    <property type="entry name" value="SUCCINYL-COA SYNTHETASE BETA CHAIN"/>
    <property type="match status" value="1"/>
</dbReference>
<dbReference type="Pfam" id="PF08442">
    <property type="entry name" value="ATP-grasp_2"/>
    <property type="match status" value="1"/>
</dbReference>
<dbReference type="Pfam" id="PF00549">
    <property type="entry name" value="Ligase_CoA"/>
    <property type="match status" value="1"/>
</dbReference>
<dbReference type="PIRSF" id="PIRSF001554">
    <property type="entry name" value="SucCS_beta"/>
    <property type="match status" value="1"/>
</dbReference>
<dbReference type="SUPFAM" id="SSF56059">
    <property type="entry name" value="Glutathione synthetase ATP-binding domain-like"/>
    <property type="match status" value="1"/>
</dbReference>
<dbReference type="SUPFAM" id="SSF52210">
    <property type="entry name" value="Succinyl-CoA synthetase domains"/>
    <property type="match status" value="1"/>
</dbReference>
<dbReference type="PROSITE" id="PS50975">
    <property type="entry name" value="ATP_GRASP"/>
    <property type="match status" value="1"/>
</dbReference>
<dbReference type="PROSITE" id="PS01217">
    <property type="entry name" value="SUCCINYL_COA_LIG_3"/>
    <property type="match status" value="1"/>
</dbReference>
<evidence type="ECO:0000255" key="1">
    <source>
        <dbReference type="HAMAP-Rule" id="MF_00558"/>
    </source>
</evidence>
<protein>
    <recommendedName>
        <fullName evidence="1">Succinate--CoA ligase [ADP-forming] subunit beta</fullName>
        <ecNumber evidence="1">6.2.1.5</ecNumber>
    </recommendedName>
    <alternativeName>
        <fullName evidence="1">Succinyl-CoA synthetase subunit beta</fullName>
        <shortName evidence="1">SCS-beta</shortName>
    </alternativeName>
</protein>
<proteinExistence type="inferred from homology"/>
<reference key="1">
    <citation type="journal article" date="2011" name="J. Bacteriol.">
        <title>Comparative genomics of 28 Salmonella enterica isolates: evidence for CRISPR-mediated adaptive sublineage evolution.</title>
        <authorList>
            <person name="Fricke W.F."/>
            <person name="Mammel M.K."/>
            <person name="McDermott P.F."/>
            <person name="Tartera C."/>
            <person name="White D.G."/>
            <person name="Leclerc J.E."/>
            <person name="Ravel J."/>
            <person name="Cebula T.A."/>
        </authorList>
    </citation>
    <scope>NUCLEOTIDE SEQUENCE [LARGE SCALE GENOMIC DNA]</scope>
    <source>
        <strain>CVM19633</strain>
    </source>
</reference>